<accession>Q5LZW8</accession>
<protein>
    <recommendedName>
        <fullName evidence="1">Orotate phosphoribosyltransferase</fullName>
        <shortName evidence="1">OPRT</shortName>
        <shortName evidence="1">OPRTase</shortName>
        <ecNumber evidence="1">2.4.2.10</ecNumber>
    </recommendedName>
</protein>
<proteinExistence type="inferred from homology"/>
<dbReference type="EC" id="2.4.2.10" evidence="1"/>
<dbReference type="EMBL" id="CP000024">
    <property type="protein sequence ID" value="AAV62547.1"/>
    <property type="molecule type" value="Genomic_DNA"/>
</dbReference>
<dbReference type="RefSeq" id="WP_002950692.1">
    <property type="nucleotide sequence ID" value="NC_006449.1"/>
</dbReference>
<dbReference type="SMR" id="Q5LZW8"/>
<dbReference type="GeneID" id="66898820"/>
<dbReference type="KEGG" id="stc:str0968"/>
<dbReference type="HOGENOM" id="CLU_074878_1_1_9"/>
<dbReference type="UniPathway" id="UPA00070">
    <property type="reaction ID" value="UER00119"/>
</dbReference>
<dbReference type="GO" id="GO:0000287">
    <property type="term" value="F:magnesium ion binding"/>
    <property type="evidence" value="ECO:0007669"/>
    <property type="project" value="UniProtKB-UniRule"/>
</dbReference>
<dbReference type="GO" id="GO:0004588">
    <property type="term" value="F:orotate phosphoribosyltransferase activity"/>
    <property type="evidence" value="ECO:0007669"/>
    <property type="project" value="UniProtKB-UniRule"/>
</dbReference>
<dbReference type="GO" id="GO:0044205">
    <property type="term" value="P:'de novo' UMP biosynthetic process"/>
    <property type="evidence" value="ECO:0007669"/>
    <property type="project" value="UniProtKB-UniRule"/>
</dbReference>
<dbReference type="GO" id="GO:0019856">
    <property type="term" value="P:pyrimidine nucleobase biosynthetic process"/>
    <property type="evidence" value="ECO:0007669"/>
    <property type="project" value="TreeGrafter"/>
</dbReference>
<dbReference type="CDD" id="cd06223">
    <property type="entry name" value="PRTases_typeI"/>
    <property type="match status" value="1"/>
</dbReference>
<dbReference type="Gene3D" id="3.40.50.2020">
    <property type="match status" value="1"/>
</dbReference>
<dbReference type="HAMAP" id="MF_01208">
    <property type="entry name" value="PyrE"/>
    <property type="match status" value="1"/>
</dbReference>
<dbReference type="InterPro" id="IPR023031">
    <property type="entry name" value="OPRT"/>
</dbReference>
<dbReference type="InterPro" id="IPR004467">
    <property type="entry name" value="Or_phspho_trans_dom"/>
</dbReference>
<dbReference type="InterPro" id="IPR000836">
    <property type="entry name" value="PRibTrfase_dom"/>
</dbReference>
<dbReference type="InterPro" id="IPR029057">
    <property type="entry name" value="PRTase-like"/>
</dbReference>
<dbReference type="NCBIfam" id="TIGR00336">
    <property type="entry name" value="pyrE"/>
    <property type="match status" value="1"/>
</dbReference>
<dbReference type="PANTHER" id="PTHR19278">
    <property type="entry name" value="OROTATE PHOSPHORIBOSYLTRANSFERASE"/>
    <property type="match status" value="1"/>
</dbReference>
<dbReference type="PANTHER" id="PTHR19278:SF9">
    <property type="entry name" value="URIDINE 5'-MONOPHOSPHATE SYNTHASE"/>
    <property type="match status" value="1"/>
</dbReference>
<dbReference type="Pfam" id="PF00156">
    <property type="entry name" value="Pribosyltran"/>
    <property type="match status" value="1"/>
</dbReference>
<dbReference type="SUPFAM" id="SSF53271">
    <property type="entry name" value="PRTase-like"/>
    <property type="match status" value="1"/>
</dbReference>
<dbReference type="PROSITE" id="PS00103">
    <property type="entry name" value="PUR_PYR_PR_TRANSFER"/>
    <property type="match status" value="1"/>
</dbReference>
<sequence length="209" mass="22828">MTLASQIASDLLDIKAVYLKPEEPFTWASGIKSPIYTDNRITLSYPETRTLIENGFVKKIKEEFPEVEVIAGTATAGIPHGAIIADKMNLPFAYIRSKPKDHGAGNQIEGRVVKGEKMVVVEDLISTGGSVLDAVAAAEREGADVIGVVAIFTYELPKAEKNFAEAGVKLVTLSNYTELIKVAKVKGYITADGLRLLKKFKENQETWQD</sequence>
<comment type="function">
    <text evidence="1">Catalyzes the transfer of a ribosyl phosphate group from 5-phosphoribose 1-diphosphate to orotate, leading to the formation of orotidine monophosphate (OMP).</text>
</comment>
<comment type="catalytic activity">
    <reaction evidence="1">
        <text>orotidine 5'-phosphate + diphosphate = orotate + 5-phospho-alpha-D-ribose 1-diphosphate</text>
        <dbReference type="Rhea" id="RHEA:10380"/>
        <dbReference type="ChEBI" id="CHEBI:30839"/>
        <dbReference type="ChEBI" id="CHEBI:33019"/>
        <dbReference type="ChEBI" id="CHEBI:57538"/>
        <dbReference type="ChEBI" id="CHEBI:58017"/>
        <dbReference type="EC" id="2.4.2.10"/>
    </reaction>
</comment>
<comment type="cofactor">
    <cofactor evidence="1">
        <name>Mg(2+)</name>
        <dbReference type="ChEBI" id="CHEBI:18420"/>
    </cofactor>
</comment>
<comment type="pathway">
    <text evidence="1">Pyrimidine metabolism; UMP biosynthesis via de novo pathway; UMP from orotate: step 1/2.</text>
</comment>
<comment type="subunit">
    <text evidence="1">Homodimer.</text>
</comment>
<comment type="similarity">
    <text evidence="1">Belongs to the purine/pyrimidine phosphoribosyltransferase family. PyrE subfamily.</text>
</comment>
<feature type="chain" id="PRO_1000066314" description="Orotate phosphoribosyltransferase">
    <location>
        <begin position="1"/>
        <end position="209"/>
    </location>
</feature>
<feature type="binding site" evidence="1">
    <location>
        <position position="96"/>
    </location>
    <ligand>
        <name>5-phospho-alpha-D-ribose 1-diphosphate</name>
        <dbReference type="ChEBI" id="CHEBI:58017"/>
        <note>ligand shared between dimeric partners</note>
    </ligand>
</feature>
<feature type="binding site" evidence="1">
    <location>
        <position position="100"/>
    </location>
    <ligand>
        <name>5-phospho-alpha-D-ribose 1-diphosphate</name>
        <dbReference type="ChEBI" id="CHEBI:58017"/>
        <note>ligand shared between dimeric partners</note>
    </ligand>
</feature>
<feature type="binding site" evidence="1">
    <location>
        <position position="102"/>
    </location>
    <ligand>
        <name>5-phospho-alpha-D-ribose 1-diphosphate</name>
        <dbReference type="ChEBI" id="CHEBI:58017"/>
        <note>ligand shared between dimeric partners</note>
    </ligand>
</feature>
<feature type="binding site" description="in other chain" evidence="1">
    <location>
        <begin position="122"/>
        <end position="130"/>
    </location>
    <ligand>
        <name>5-phospho-alpha-D-ribose 1-diphosphate</name>
        <dbReference type="ChEBI" id="CHEBI:58017"/>
        <note>ligand shared between dimeric partners</note>
    </ligand>
</feature>
<feature type="binding site" evidence="1">
    <location>
        <position position="126"/>
    </location>
    <ligand>
        <name>orotate</name>
        <dbReference type="ChEBI" id="CHEBI:30839"/>
    </ligand>
</feature>
<keyword id="KW-0328">Glycosyltransferase</keyword>
<keyword id="KW-0460">Magnesium</keyword>
<keyword id="KW-0665">Pyrimidine biosynthesis</keyword>
<keyword id="KW-0808">Transferase</keyword>
<evidence type="ECO:0000255" key="1">
    <source>
        <dbReference type="HAMAP-Rule" id="MF_01208"/>
    </source>
</evidence>
<name>PYRE_STRT1</name>
<organism>
    <name type="scientific">Streptococcus thermophilus (strain CNRZ 1066)</name>
    <dbReference type="NCBI Taxonomy" id="299768"/>
    <lineage>
        <taxon>Bacteria</taxon>
        <taxon>Bacillati</taxon>
        <taxon>Bacillota</taxon>
        <taxon>Bacilli</taxon>
        <taxon>Lactobacillales</taxon>
        <taxon>Streptococcaceae</taxon>
        <taxon>Streptococcus</taxon>
    </lineage>
</organism>
<reference key="1">
    <citation type="journal article" date="2004" name="Nat. Biotechnol.">
        <title>Complete sequence and comparative genome analysis of the dairy bacterium Streptococcus thermophilus.</title>
        <authorList>
            <person name="Bolotin A."/>
            <person name="Quinquis B."/>
            <person name="Renault P."/>
            <person name="Sorokin A."/>
            <person name="Ehrlich S.D."/>
            <person name="Kulakauskas S."/>
            <person name="Lapidus A."/>
            <person name="Goltsman E."/>
            <person name="Mazur M."/>
            <person name="Pusch G.D."/>
            <person name="Fonstein M."/>
            <person name="Overbeek R."/>
            <person name="Kyprides N."/>
            <person name="Purnelle B."/>
            <person name="Prozzi D."/>
            <person name="Ngui K."/>
            <person name="Masuy D."/>
            <person name="Hancy F."/>
            <person name="Burteau S."/>
            <person name="Boutry M."/>
            <person name="Delcour J."/>
            <person name="Goffeau A."/>
            <person name="Hols P."/>
        </authorList>
    </citation>
    <scope>NUCLEOTIDE SEQUENCE [LARGE SCALE GENOMIC DNA]</scope>
    <source>
        <strain>CNRZ 1066</strain>
    </source>
</reference>
<gene>
    <name evidence="1" type="primary">pyrE</name>
    <name type="ordered locus">str0968</name>
</gene>